<evidence type="ECO:0000255" key="1">
    <source>
        <dbReference type="HAMAP-Rule" id="MF_00570"/>
    </source>
</evidence>
<gene>
    <name evidence="1" type="primary">pncB</name>
    <name type="ordered locus">EFER_1075</name>
</gene>
<comment type="function">
    <text evidence="1">Catalyzes the synthesis of beta-nicotinate D-ribonucleotide from nicotinate and 5-phospho-D-ribose 1-phosphate at the expense of ATP.</text>
</comment>
<comment type="catalytic activity">
    <reaction evidence="1">
        <text>nicotinate + 5-phospho-alpha-D-ribose 1-diphosphate + ATP + H2O = nicotinate beta-D-ribonucleotide + ADP + phosphate + diphosphate</text>
        <dbReference type="Rhea" id="RHEA:36163"/>
        <dbReference type="ChEBI" id="CHEBI:15377"/>
        <dbReference type="ChEBI" id="CHEBI:30616"/>
        <dbReference type="ChEBI" id="CHEBI:32544"/>
        <dbReference type="ChEBI" id="CHEBI:33019"/>
        <dbReference type="ChEBI" id="CHEBI:43474"/>
        <dbReference type="ChEBI" id="CHEBI:57502"/>
        <dbReference type="ChEBI" id="CHEBI:58017"/>
        <dbReference type="ChEBI" id="CHEBI:456216"/>
        <dbReference type="EC" id="6.3.4.21"/>
    </reaction>
</comment>
<comment type="pathway">
    <text evidence="1">Cofactor biosynthesis; NAD(+) biosynthesis; nicotinate D-ribonucleotide from nicotinate: step 1/1.</text>
</comment>
<comment type="PTM">
    <text evidence="1">Transiently phosphorylated on a His residue during the reaction cycle. Phosphorylation strongly increases the affinity for substrates and increases the rate of nicotinate D-ribonucleotide production. Dephosphorylation regenerates the low-affinity form of the enzyme, leading to product release.</text>
</comment>
<comment type="similarity">
    <text evidence="1">Belongs to the NAPRTase family.</text>
</comment>
<sequence>MTQFASPVLHSLLDTDAYKLHMQQAVFHHYHDVHVAAEFRCRGDDLLGIYADAIREQVHAMQHLRLQEEEFQWLTGLPFFKPDYLNWLRDFRYNPEQVSVTNDNGKLNIRLTGPWLEVIMWEVPLLAVISELVHHYRSPEASVQLAMNTLEQKLADFTTLTAGLDMSRFHLMDFGTRRRFSRDVQEAIVKRLQQESWFVGTSNYDLARRLSLTPMGTQAHEWFQAHQQISPDLATSQRAALAAWLEEYPDQLGIALTDCITMDAFLRDFGVEFASRYQGLRHDSGDPVEWGEKAIAHYLKLGIDPQSKVLVFSDNLDLTKAIELYRHFSSRIKLSFGIGTRLTCDIPQVKPLNIVIKLVECNGKPVAKLSDSPGKTICHDKAFVRALRKAFDLPQIKKAS</sequence>
<feature type="chain" id="PRO_1000129474" description="Nicotinate phosphoribosyltransferase">
    <location>
        <begin position="1"/>
        <end position="400"/>
    </location>
</feature>
<feature type="modified residue" description="Phosphohistidine; by autocatalysis" evidence="1">
    <location>
        <position position="220"/>
    </location>
</feature>
<dbReference type="EC" id="6.3.4.21" evidence="1"/>
<dbReference type="EMBL" id="CU928158">
    <property type="protein sequence ID" value="CAQ88604.1"/>
    <property type="molecule type" value="Genomic_DNA"/>
</dbReference>
<dbReference type="RefSeq" id="WP_000191397.1">
    <property type="nucleotide sequence ID" value="NC_011740.1"/>
</dbReference>
<dbReference type="SMR" id="B7LNU8"/>
<dbReference type="GeneID" id="75057874"/>
<dbReference type="KEGG" id="efe:EFER_1075"/>
<dbReference type="HOGENOM" id="CLU_030991_1_0_6"/>
<dbReference type="OrthoDB" id="9771406at2"/>
<dbReference type="UniPathway" id="UPA00253">
    <property type="reaction ID" value="UER00457"/>
</dbReference>
<dbReference type="Proteomes" id="UP000000745">
    <property type="component" value="Chromosome"/>
</dbReference>
<dbReference type="GO" id="GO:0005829">
    <property type="term" value="C:cytosol"/>
    <property type="evidence" value="ECO:0007669"/>
    <property type="project" value="TreeGrafter"/>
</dbReference>
<dbReference type="GO" id="GO:0004516">
    <property type="term" value="F:nicotinate phosphoribosyltransferase activity"/>
    <property type="evidence" value="ECO:0007669"/>
    <property type="project" value="UniProtKB-UniRule"/>
</dbReference>
<dbReference type="GO" id="GO:0034355">
    <property type="term" value="P:NAD biosynthetic process via the salvage pathway"/>
    <property type="evidence" value="ECO:0007669"/>
    <property type="project" value="TreeGrafter"/>
</dbReference>
<dbReference type="CDD" id="cd01401">
    <property type="entry name" value="PncB_like"/>
    <property type="match status" value="1"/>
</dbReference>
<dbReference type="FunFam" id="3.20.140.10:FF:000001">
    <property type="entry name" value="Nicotinate phosphoribosyltransferase"/>
    <property type="match status" value="1"/>
</dbReference>
<dbReference type="Gene3D" id="3.20.140.10">
    <property type="entry name" value="nicotinate phosphoribosyltransferase"/>
    <property type="match status" value="1"/>
</dbReference>
<dbReference type="HAMAP" id="MF_00570">
    <property type="entry name" value="NAPRTase"/>
    <property type="match status" value="1"/>
</dbReference>
<dbReference type="InterPro" id="IPR041525">
    <property type="entry name" value="N/Namide_PRibTrfase"/>
</dbReference>
<dbReference type="InterPro" id="IPR040727">
    <property type="entry name" value="NAPRTase_N"/>
</dbReference>
<dbReference type="InterPro" id="IPR006406">
    <property type="entry name" value="Nic_PRibTrfase"/>
</dbReference>
<dbReference type="InterPro" id="IPR007229">
    <property type="entry name" value="Nic_PRibTrfase-Fam"/>
</dbReference>
<dbReference type="InterPro" id="IPR036068">
    <property type="entry name" value="Nicotinate_pribotase-like_C"/>
</dbReference>
<dbReference type="NCBIfam" id="TIGR01514">
    <property type="entry name" value="NAPRTase"/>
    <property type="match status" value="1"/>
</dbReference>
<dbReference type="NCBIfam" id="NF003704">
    <property type="entry name" value="PRK05321.1"/>
    <property type="match status" value="1"/>
</dbReference>
<dbReference type="PANTHER" id="PTHR11098">
    <property type="entry name" value="NICOTINATE PHOSPHORIBOSYLTRANSFERASE"/>
    <property type="match status" value="1"/>
</dbReference>
<dbReference type="PANTHER" id="PTHR11098:SF1">
    <property type="entry name" value="NICOTINATE PHOSPHORIBOSYLTRANSFERASE"/>
    <property type="match status" value="1"/>
</dbReference>
<dbReference type="Pfam" id="PF04095">
    <property type="entry name" value="NAPRTase"/>
    <property type="match status" value="1"/>
</dbReference>
<dbReference type="Pfam" id="PF17767">
    <property type="entry name" value="NAPRTase_N"/>
    <property type="match status" value="1"/>
</dbReference>
<dbReference type="PIRSF" id="PIRSF000484">
    <property type="entry name" value="NAPRT"/>
    <property type="match status" value="1"/>
</dbReference>
<dbReference type="SUPFAM" id="SSF51690">
    <property type="entry name" value="Nicotinate/Quinolinate PRTase C-terminal domain-like"/>
    <property type="match status" value="1"/>
</dbReference>
<dbReference type="SUPFAM" id="SSF54675">
    <property type="entry name" value="Nicotinate/Quinolinate PRTase N-terminal domain-like"/>
    <property type="match status" value="1"/>
</dbReference>
<proteinExistence type="inferred from homology"/>
<organism>
    <name type="scientific">Escherichia fergusonii (strain ATCC 35469 / DSM 13698 / CCUG 18766 / IAM 14443 / JCM 21226 / LMG 7866 / NBRC 102419 / NCTC 12128 / CDC 0568-73)</name>
    <dbReference type="NCBI Taxonomy" id="585054"/>
    <lineage>
        <taxon>Bacteria</taxon>
        <taxon>Pseudomonadati</taxon>
        <taxon>Pseudomonadota</taxon>
        <taxon>Gammaproteobacteria</taxon>
        <taxon>Enterobacterales</taxon>
        <taxon>Enterobacteriaceae</taxon>
        <taxon>Escherichia</taxon>
    </lineage>
</organism>
<reference key="1">
    <citation type="journal article" date="2009" name="PLoS Genet.">
        <title>Organised genome dynamics in the Escherichia coli species results in highly diverse adaptive paths.</title>
        <authorList>
            <person name="Touchon M."/>
            <person name="Hoede C."/>
            <person name="Tenaillon O."/>
            <person name="Barbe V."/>
            <person name="Baeriswyl S."/>
            <person name="Bidet P."/>
            <person name="Bingen E."/>
            <person name="Bonacorsi S."/>
            <person name="Bouchier C."/>
            <person name="Bouvet O."/>
            <person name="Calteau A."/>
            <person name="Chiapello H."/>
            <person name="Clermont O."/>
            <person name="Cruveiller S."/>
            <person name="Danchin A."/>
            <person name="Diard M."/>
            <person name="Dossat C."/>
            <person name="Karoui M.E."/>
            <person name="Frapy E."/>
            <person name="Garry L."/>
            <person name="Ghigo J.M."/>
            <person name="Gilles A.M."/>
            <person name="Johnson J."/>
            <person name="Le Bouguenec C."/>
            <person name="Lescat M."/>
            <person name="Mangenot S."/>
            <person name="Martinez-Jehanne V."/>
            <person name="Matic I."/>
            <person name="Nassif X."/>
            <person name="Oztas S."/>
            <person name="Petit M.A."/>
            <person name="Pichon C."/>
            <person name="Rouy Z."/>
            <person name="Ruf C.S."/>
            <person name="Schneider D."/>
            <person name="Tourret J."/>
            <person name="Vacherie B."/>
            <person name="Vallenet D."/>
            <person name="Medigue C."/>
            <person name="Rocha E.P.C."/>
            <person name="Denamur E."/>
        </authorList>
    </citation>
    <scope>NUCLEOTIDE SEQUENCE [LARGE SCALE GENOMIC DNA]</scope>
    <source>
        <strain>ATCC 35469 / DSM 13698 / BCRC 15582 / CCUG 18766 / IAM 14443 / JCM 21226 / LMG 7866 / NBRC 102419 / NCTC 12128 / CDC 0568-73</strain>
    </source>
</reference>
<accession>B7LNU8</accession>
<name>PNCB_ESCF3</name>
<protein>
    <recommendedName>
        <fullName evidence="1">Nicotinate phosphoribosyltransferase</fullName>
        <shortName evidence="1">NAPRTase</shortName>
        <ecNumber evidence="1">6.3.4.21</ecNumber>
    </recommendedName>
</protein>
<keyword id="KW-0436">Ligase</keyword>
<keyword id="KW-0597">Phosphoprotein</keyword>
<keyword id="KW-0662">Pyridine nucleotide biosynthesis</keyword>